<organism>
    <name type="scientific">Escherichia coli (strain K12)</name>
    <dbReference type="NCBI Taxonomy" id="83333"/>
    <lineage>
        <taxon>Bacteria</taxon>
        <taxon>Pseudomonadati</taxon>
        <taxon>Pseudomonadota</taxon>
        <taxon>Gammaproteobacteria</taxon>
        <taxon>Enterobacterales</taxon>
        <taxon>Enterobacteriaceae</taxon>
        <taxon>Escherichia</taxon>
    </lineage>
</organism>
<feature type="chain" id="PRO_0000445181" description="Protein YecU">
    <location>
        <begin position="1"/>
        <end position="58"/>
    </location>
</feature>
<protein>
    <recommendedName>
        <fullName evidence="2">Protein YecU</fullName>
    </recommendedName>
</protein>
<reference key="1">
    <citation type="journal article" date="1997" name="Science">
        <title>The complete genome sequence of Escherichia coli K-12.</title>
        <authorList>
            <person name="Blattner F.R."/>
            <person name="Plunkett G. III"/>
            <person name="Bloch C.A."/>
            <person name="Perna N.T."/>
            <person name="Burland V."/>
            <person name="Riley M."/>
            <person name="Collado-Vides J."/>
            <person name="Glasner J.D."/>
            <person name="Rode C.K."/>
            <person name="Mayhew G.F."/>
            <person name="Gregor J."/>
            <person name="Davis N.W."/>
            <person name="Kirkpatrick H.A."/>
            <person name="Goeden M.A."/>
            <person name="Rose D.J."/>
            <person name="Mau B."/>
            <person name="Shao Y."/>
        </authorList>
    </citation>
    <scope>NUCLEOTIDE SEQUENCE [LARGE SCALE GENOMIC DNA]</scope>
    <source>
        <strain>K12 / MG1655 / ATCC 47076</strain>
    </source>
</reference>
<reference key="2">
    <citation type="journal article" date="2018" name="Proteomics">
        <title>Identifying new small proteins in Escherichia coli.</title>
        <authorList>
            <person name="VanOrsdel C.E."/>
            <person name="Kelly J.P."/>
            <person name="Burke B.N."/>
            <person name="Lein C.D."/>
            <person name="Oufiero C.E."/>
            <person name="Sanchez J.F."/>
            <person name="Wimmers L.E."/>
            <person name="Hearn D.J."/>
            <person name="Abuikhdair F.J."/>
            <person name="Barnhart K.R."/>
            <person name="Duley M.L."/>
            <person name="Ernst S.E.G."/>
            <person name="Kenerson B.A."/>
            <person name="Serafin A.J."/>
            <person name="Hemm M.R."/>
        </authorList>
    </citation>
    <scope>IDENTIFICATION</scope>
    <scope>INDUCTION</scope>
</reference>
<name>YECU_ECOLI</name>
<dbReference type="EMBL" id="U00096">
    <property type="protein sequence ID" value="AYC08224.1"/>
    <property type="molecule type" value="Genomic_DNA"/>
</dbReference>
<dbReference type="RefSeq" id="WP_000590347.1">
    <property type="nucleotide sequence ID" value="NZ_STEB01000026.1"/>
</dbReference>
<dbReference type="EnsemblBacteria" id="AYC08224">
    <property type="protein sequence ID" value="AYC08224"/>
    <property type="gene ID" value="b4752"/>
</dbReference>
<dbReference type="GeneID" id="75206570"/>
<dbReference type="KEGG" id="ecoc:C3026_10865"/>
<dbReference type="InParanoid" id="P0DPP3"/>
<dbReference type="OrthoDB" id="6572885at2"/>
<dbReference type="BioCyc" id="EcoCyc:MONOMER0-4430"/>
<dbReference type="PRO" id="PR:P0DPP3"/>
<dbReference type="Proteomes" id="UP000000625">
    <property type="component" value="Chromosome"/>
</dbReference>
<dbReference type="Pfam" id="PF23680">
    <property type="entry name" value="YecU"/>
    <property type="match status" value="1"/>
</dbReference>
<comment type="induction">
    <text evidence="1">Expressed in both exponential and stationary phase; expression is higher in exponential phase (at protein level).</text>
</comment>
<evidence type="ECO:0000269" key="1">
    <source>
    </source>
</evidence>
<evidence type="ECO:0000303" key="2">
    <source>
    </source>
</evidence>
<sequence>MIKIFIGHYINVFYSTADITLKKQPLLFLAKLMVYSAALTFFTANFHCNMTRKINEYA</sequence>
<gene>
    <name evidence="2" type="primary">yecU</name>
    <name type="ordered locus">b4752</name>
</gene>
<keyword id="KW-1185">Reference proteome</keyword>
<proteinExistence type="evidence at protein level"/>
<accession>P0DPP3</accession>
<accession>A0A385XJL6</accession>